<gene>
    <name evidence="1" type="primary">rps8</name>
    <name type="ordered locus">DKAM_1160</name>
</gene>
<name>RS8_DESA1</name>
<feature type="chain" id="PRO_1000165328" description="Small ribosomal subunit protein uS8">
    <location>
        <begin position="1"/>
        <end position="133"/>
    </location>
</feature>
<keyword id="KW-0687">Ribonucleoprotein</keyword>
<keyword id="KW-0689">Ribosomal protein</keyword>
<keyword id="KW-0694">RNA-binding</keyword>
<keyword id="KW-0699">rRNA-binding</keyword>
<comment type="function">
    <text evidence="1">One of the primary rRNA binding proteins, it binds directly to 16S rRNA central domain where it helps coordinate assembly of the platform of the 30S subunit.</text>
</comment>
<comment type="subunit">
    <text evidence="1">Part of the 30S ribosomal subunit.</text>
</comment>
<comment type="similarity">
    <text evidence="1">Belongs to the universal ribosomal protein uS8 family.</text>
</comment>
<evidence type="ECO:0000255" key="1">
    <source>
        <dbReference type="HAMAP-Rule" id="MF_01302"/>
    </source>
</evidence>
<evidence type="ECO:0000305" key="2"/>
<organism>
    <name type="scientific">Desulfurococcus amylolyticus (strain DSM 18924 / JCM 16383 / VKM B-2413 / 1221n)</name>
    <name type="common">Desulfurococcus kamchatkensis</name>
    <dbReference type="NCBI Taxonomy" id="490899"/>
    <lineage>
        <taxon>Archaea</taxon>
        <taxon>Thermoproteota</taxon>
        <taxon>Thermoprotei</taxon>
        <taxon>Desulfurococcales</taxon>
        <taxon>Desulfurococcaceae</taxon>
        <taxon>Desulfurococcus</taxon>
    </lineage>
</organism>
<proteinExistence type="inferred from homology"/>
<protein>
    <recommendedName>
        <fullName evidence="1">Small ribosomal subunit protein uS8</fullName>
    </recommendedName>
    <alternativeName>
        <fullName evidence="2">30S ribosomal protein S8</fullName>
    </alternativeName>
</protein>
<reference key="1">
    <citation type="journal article" date="2009" name="J. Bacteriol.">
        <title>Complete genome sequence of the anaerobic, protein-degrading hyperthermophilic crenarchaeon Desulfurococcus kamchatkensis.</title>
        <authorList>
            <person name="Ravin N.V."/>
            <person name="Mardanov A.V."/>
            <person name="Beletsky A.V."/>
            <person name="Kublanov I.V."/>
            <person name="Kolganova T.V."/>
            <person name="Lebedinsky A.V."/>
            <person name="Chernyh N.A."/>
            <person name="Bonch-Osmolovskaya E.A."/>
            <person name="Skryabin K.G."/>
        </authorList>
    </citation>
    <scope>NUCLEOTIDE SEQUENCE [LARGE SCALE GENOMIC DNA]</scope>
    <source>
        <strain>DSM 18924 / JCM 16383 / VKM B-2413 / 1221n</strain>
    </source>
</reference>
<sequence length="133" mass="15149">MVVMDTLANALSAIYNAEIRAKKEVVVWPASKLTLNVLKVLQREGYIGEFEYIDDGRWGKIKIQLLGRINKIGVIKPRYPVKHRELAEFPEWLKRYLPAYNIGVIIVSTPYGVLSHKEAVEKQTGGVLLAYCY</sequence>
<dbReference type="EMBL" id="CP001140">
    <property type="protein sequence ID" value="ACL11486.1"/>
    <property type="molecule type" value="Genomic_DNA"/>
</dbReference>
<dbReference type="RefSeq" id="WP_012608827.1">
    <property type="nucleotide sequence ID" value="NC_011766.1"/>
</dbReference>
<dbReference type="SMR" id="B8D5V5"/>
<dbReference type="STRING" id="490899.DKAM_1160"/>
<dbReference type="GeneID" id="7171247"/>
<dbReference type="KEGG" id="dka:DKAM_1160"/>
<dbReference type="eggNOG" id="arCOG04091">
    <property type="taxonomic scope" value="Archaea"/>
</dbReference>
<dbReference type="HOGENOM" id="CLU_098428_1_1_2"/>
<dbReference type="Proteomes" id="UP000006903">
    <property type="component" value="Chromosome"/>
</dbReference>
<dbReference type="GO" id="GO:1990904">
    <property type="term" value="C:ribonucleoprotein complex"/>
    <property type="evidence" value="ECO:0007669"/>
    <property type="project" value="UniProtKB-KW"/>
</dbReference>
<dbReference type="GO" id="GO:0005840">
    <property type="term" value="C:ribosome"/>
    <property type="evidence" value="ECO:0007669"/>
    <property type="project" value="UniProtKB-KW"/>
</dbReference>
<dbReference type="GO" id="GO:0019843">
    <property type="term" value="F:rRNA binding"/>
    <property type="evidence" value="ECO:0007669"/>
    <property type="project" value="UniProtKB-UniRule"/>
</dbReference>
<dbReference type="GO" id="GO:0003735">
    <property type="term" value="F:structural constituent of ribosome"/>
    <property type="evidence" value="ECO:0007669"/>
    <property type="project" value="InterPro"/>
</dbReference>
<dbReference type="GO" id="GO:0006412">
    <property type="term" value="P:translation"/>
    <property type="evidence" value="ECO:0007669"/>
    <property type="project" value="UniProtKB-UniRule"/>
</dbReference>
<dbReference type="FunFam" id="3.30.1370.30:FF:000001">
    <property type="entry name" value="40S ribosomal protein S15a"/>
    <property type="match status" value="1"/>
</dbReference>
<dbReference type="Gene3D" id="3.30.1370.30">
    <property type="match status" value="1"/>
</dbReference>
<dbReference type="Gene3D" id="3.30.1490.10">
    <property type="match status" value="1"/>
</dbReference>
<dbReference type="HAMAP" id="MF_01302_A">
    <property type="entry name" value="Ribosomal_uS8_A"/>
    <property type="match status" value="1"/>
</dbReference>
<dbReference type="InterPro" id="IPR000630">
    <property type="entry name" value="Ribosomal_uS8"/>
</dbReference>
<dbReference type="InterPro" id="IPR035987">
    <property type="entry name" value="Ribosomal_uS8_sf"/>
</dbReference>
<dbReference type="NCBIfam" id="NF003115">
    <property type="entry name" value="PRK04034.1"/>
    <property type="match status" value="1"/>
</dbReference>
<dbReference type="PANTHER" id="PTHR11758">
    <property type="entry name" value="40S RIBOSOMAL PROTEIN S15A"/>
    <property type="match status" value="1"/>
</dbReference>
<dbReference type="Pfam" id="PF00410">
    <property type="entry name" value="Ribosomal_S8"/>
    <property type="match status" value="1"/>
</dbReference>
<dbReference type="SUPFAM" id="SSF56047">
    <property type="entry name" value="Ribosomal protein S8"/>
    <property type="match status" value="1"/>
</dbReference>
<accession>B8D5V5</accession>